<sequence>MPSSISWGLLLLAGLSCLATGCLIEDSEKSDAPKHDQENSASHKIAPNLAEFAFSLYRVLAHESNTTNIFFSPVSIATALGSLSLGTKADTHTQIMEGVGFNLTEISEAEIHQGFQHLLQNLNKSNSQLQLTTGNGLFIDHNMKLLDKFLEDIKNLYHSEAFSTDFTNTEEAKKQINTYVEKGTQGKIVDLVKDLDRDSGLALVNYIFFKGTLEKPFKADHTMEQDFHVDEATTVRVPMMNRLGMFDLHYCPTLSSMVLKMKYLGDITAIFIMPKVGRMEYVEETLTKEFLDKLLKKDYTGKNTVHFPKLSISGTIDLKPVLTRLGITKVFSHEADLSGITEDAPLRVSQALHKAVLTIDEKGTEAERHTVKGPMALTLAPEVKFNRPFLVTLYDRSTKSPLFVGRVVNPTLH</sequence>
<organism>
    <name type="scientific">Ictidomys tridecemlineatus</name>
    <name type="common">Thirteen-lined ground squirrel</name>
    <name type="synonym">Spermophilus tridecemlineatus</name>
    <dbReference type="NCBI Taxonomy" id="43179"/>
    <lineage>
        <taxon>Eukaryota</taxon>
        <taxon>Metazoa</taxon>
        <taxon>Chordata</taxon>
        <taxon>Craniata</taxon>
        <taxon>Vertebrata</taxon>
        <taxon>Euteleostomi</taxon>
        <taxon>Mammalia</taxon>
        <taxon>Eutheria</taxon>
        <taxon>Euarchontoglires</taxon>
        <taxon>Glires</taxon>
        <taxon>Rodentia</taxon>
        <taxon>Sciuromorpha</taxon>
        <taxon>Sciuridae</taxon>
        <taxon>Xerinae</taxon>
        <taxon>Marmotini</taxon>
        <taxon>Ictidomys</taxon>
    </lineage>
</organism>
<protein>
    <recommendedName>
        <fullName>Alpha-1-antitrypsin-like protein GS55-LT</fullName>
    </recommendedName>
</protein>
<reference key="1">
    <citation type="journal article" date="1997" name="Gene">
        <title>Expression of multiple alpha1-antitrypsin-like genes in hibernating species of the squirrel family.</title>
        <authorList>
            <person name="Takamatsu N."/>
            <person name="Kojima M."/>
            <person name="Taniyama M."/>
            <person name="Ohba K."/>
            <person name="Uematsu T."/>
            <person name="Segawa C."/>
            <person name="Tsutou S."/>
            <person name="Watanabe M."/>
            <person name="Kondo J."/>
            <person name="Kondo N."/>
            <person name="Shiba T."/>
        </authorList>
    </citation>
    <scope>NUCLEOTIDE SEQUENCE [MRNA]</scope>
    <source>
        <tissue>Liver</tissue>
    </source>
</reference>
<accession>O54762</accession>
<name>ALLT_ICTTR</name>
<evidence type="ECO:0000250" key="1"/>
<evidence type="ECO:0000255" key="2"/>
<evidence type="ECO:0000305" key="3"/>
<proteinExistence type="evidence at transcript level"/>
<dbReference type="EMBL" id="AB000551">
    <property type="protein sequence ID" value="BAA24421.1"/>
    <property type="molecule type" value="mRNA"/>
</dbReference>
<dbReference type="RefSeq" id="NP_001299613.1">
    <property type="nucleotide sequence ID" value="NM_001312684.1"/>
</dbReference>
<dbReference type="SMR" id="O54762"/>
<dbReference type="FunCoup" id="O54762">
    <property type="interactions" value="374"/>
</dbReference>
<dbReference type="MEROPS" id="I04.001"/>
<dbReference type="GeneID" id="101963508"/>
<dbReference type="InParanoid" id="O54762"/>
<dbReference type="OrthoDB" id="671595at2759"/>
<dbReference type="Proteomes" id="UP000005215">
    <property type="component" value="Unassembled WGS sequence"/>
</dbReference>
<dbReference type="GO" id="GO:0005615">
    <property type="term" value="C:extracellular space"/>
    <property type="evidence" value="ECO:0007669"/>
    <property type="project" value="InterPro"/>
</dbReference>
<dbReference type="GO" id="GO:0004867">
    <property type="term" value="F:serine-type endopeptidase inhibitor activity"/>
    <property type="evidence" value="ECO:0007669"/>
    <property type="project" value="UniProtKB-KW"/>
</dbReference>
<dbReference type="FunFam" id="2.30.39.10:FF:000003">
    <property type="entry name" value="alpha-1-antitrypsin isoform X1"/>
    <property type="match status" value="1"/>
</dbReference>
<dbReference type="FunFam" id="3.30.497.10:FF:000001">
    <property type="entry name" value="Serine protease inhibitor"/>
    <property type="match status" value="1"/>
</dbReference>
<dbReference type="FunFam" id="2.10.310.10:FF:000001">
    <property type="entry name" value="Serpin family A member 1"/>
    <property type="match status" value="1"/>
</dbReference>
<dbReference type="Gene3D" id="2.30.39.10">
    <property type="entry name" value="Alpha-1-antitrypsin, domain 1"/>
    <property type="match status" value="1"/>
</dbReference>
<dbReference type="Gene3D" id="3.30.497.10">
    <property type="entry name" value="Antithrombin, subunit I, domain 2"/>
    <property type="match status" value="1"/>
</dbReference>
<dbReference type="InterPro" id="IPR023795">
    <property type="entry name" value="Serpin_CS"/>
</dbReference>
<dbReference type="InterPro" id="IPR023796">
    <property type="entry name" value="Serpin_dom"/>
</dbReference>
<dbReference type="InterPro" id="IPR000215">
    <property type="entry name" value="Serpin_fam"/>
</dbReference>
<dbReference type="InterPro" id="IPR036186">
    <property type="entry name" value="Serpin_sf"/>
</dbReference>
<dbReference type="InterPro" id="IPR042178">
    <property type="entry name" value="Serpin_sf_1"/>
</dbReference>
<dbReference type="InterPro" id="IPR042185">
    <property type="entry name" value="Serpin_sf_2"/>
</dbReference>
<dbReference type="PANTHER" id="PTHR11461:SF165">
    <property type="entry name" value="ALPHA-1-ANTITRYPSIN"/>
    <property type="match status" value="1"/>
</dbReference>
<dbReference type="PANTHER" id="PTHR11461">
    <property type="entry name" value="SERINE PROTEASE INHIBITOR, SERPIN"/>
    <property type="match status" value="1"/>
</dbReference>
<dbReference type="Pfam" id="PF00079">
    <property type="entry name" value="Serpin"/>
    <property type="match status" value="1"/>
</dbReference>
<dbReference type="SMART" id="SM00093">
    <property type="entry name" value="SERPIN"/>
    <property type="match status" value="1"/>
</dbReference>
<dbReference type="SUPFAM" id="SSF56574">
    <property type="entry name" value="Serpins"/>
    <property type="match status" value="1"/>
</dbReference>
<dbReference type="PROSITE" id="PS00284">
    <property type="entry name" value="SERPIN"/>
    <property type="match status" value="1"/>
</dbReference>
<keyword id="KW-0325">Glycoprotein</keyword>
<keyword id="KW-0646">Protease inhibitor</keyword>
<keyword id="KW-1185">Reference proteome</keyword>
<keyword id="KW-0964">Secreted</keyword>
<keyword id="KW-0722">Serine protease inhibitor</keyword>
<keyword id="KW-0732">Signal</keyword>
<feature type="signal peptide" evidence="2">
    <location>
        <begin position="1"/>
        <end position="21"/>
    </location>
</feature>
<feature type="chain" id="PRO_0000032401" description="Alpha-1-antitrypsin-like protein GS55-LT">
    <location>
        <begin position="22"/>
        <end position="413"/>
    </location>
</feature>
<feature type="region of interest" description="RCL">
    <location>
        <begin position="368"/>
        <end position="387"/>
    </location>
</feature>
<feature type="site" description="Reactive bond" evidence="1">
    <location>
        <begin position="377"/>
        <end position="378"/>
    </location>
</feature>
<feature type="glycosylation site" description="N-linked (GlcNAc...) asparagine" evidence="2">
    <location>
        <position position="65"/>
    </location>
</feature>
<feature type="glycosylation site" description="N-linked (GlcNAc...) asparagine" evidence="2">
    <location>
        <position position="102"/>
    </location>
</feature>
<feature type="glycosylation site" description="N-linked (GlcNAc...) asparagine" evidence="2">
    <location>
        <position position="123"/>
    </location>
</feature>
<comment type="function">
    <text evidence="1">Inhibitor of serine proteases.</text>
</comment>
<comment type="subcellular location">
    <subcellularLocation>
        <location evidence="1">Secreted</location>
    </subcellularLocation>
</comment>
<comment type="domain">
    <text evidence="1">The reactive center loop (RCL) extends out from the body of the protein and directs binding to the target protease. The protease cleaves the serpin at the reactive site within the RCL, establishing a covalent linkage between the serpin reactive site and the active site of the protease. The resulting inactive serpin-protease complex is highly stable (By similarity).</text>
</comment>
<comment type="similarity">
    <text evidence="3">Belongs to the serpin family.</text>
</comment>